<proteinExistence type="evidence at transcript level"/>
<reference key="1">
    <citation type="submission" date="1997-06" db="EMBL/GenBank/DDBJ databases">
        <authorList>
            <person name="Vogel R."/>
            <person name="Rausch T."/>
        </authorList>
    </citation>
    <scope>NUCLEOTIDE SEQUENCE [MRNA]</scope>
    <source>
        <tissue>Root</tissue>
    </source>
</reference>
<accession>O23755</accession>
<protein>
    <recommendedName>
        <fullName>Elongation factor 2</fullName>
        <shortName>EF-2</shortName>
        <ecNumber evidence="2">3.6.5.-</ecNumber>
    </recommendedName>
</protein>
<sequence>MVKFTADELRAIMDCKHNIRNMSVIAHVDHGKSTLTDSLVAAAGIIAQEVAGDVRMTDTRADEAERGITIKSTGISLYYQMTDEALQSYKGERKGNDYLINLIDSPGHVDFSSEVTAALRITDGALVVVDCIEGVCVQTETVLRQALGERIRPVLTVNKMDRCFLELQVDGEEAYTTFQKVIENANVIMATYEDPLLGDVQVYPEKGTVAFSAGLHGWAFTLSNFAKMYASKFGVDESKMMERLWGENFFDPATKKWTTKNSGNASCKRGFVQFCYEPIKQIIAACMNDQKDKLLAHVTKLGIQMKTEEKDLMGRPLMKRVMQTWLPASSALLEMMIHHLPSPATAQRYRVENLYEGPMDDVYATAIRNCDPEGPLMLYVSKMIPASDKGRFFAFGRVFAGKVSTGMKVRIMGPNYVPGEKKDLYVKNVQRTVIWMGKKQETVEDVPCGNTVALVGLDQYITKNATLTNEKESDAHPIRAMKFSVSPVVRVAVQCKVASDLPKLVEGLKRLAKSDPMVVCSIEESGEHIIAGAGELHLEICLKDLQDDFMGGAEIIKSDPVVSFRETVLDRSVRTVMSKSPNKHNRLYMEARPMEEGLAEAIDEGRIGPRDDPKNRSKILAEEYGWDKDLAKKIWCFGPETTGPNMVVDMCKGVQYLNEIKDSVVAGFQWASKEGALAEENMRGICFEVCDVVLHTDAIHRGGGQIIPTARRVFYASQLTAKPRLLEPVYLVEIQAPENALGGIYSVLNQKRGHVFEEMQRPGTPLYNIKAYLPVVESFGFSSTLRASTSGQAFPQCVFDHWEMMPSDPLEAGSQASTLVSVIRKRKGLKEQMTPLSEFEDKL</sequence>
<dbReference type="EC" id="3.6.5.-" evidence="2"/>
<dbReference type="EMBL" id="Z97178">
    <property type="protein sequence ID" value="CAB09900.1"/>
    <property type="molecule type" value="mRNA"/>
</dbReference>
<dbReference type="PIR" id="T14579">
    <property type="entry name" value="T14579"/>
</dbReference>
<dbReference type="RefSeq" id="NP_001290010.1">
    <property type="nucleotide sequence ID" value="NM_001303081.2"/>
</dbReference>
<dbReference type="SMR" id="O23755"/>
<dbReference type="GeneID" id="104906141"/>
<dbReference type="KEGG" id="bvg:104906141"/>
<dbReference type="GO" id="GO:0005829">
    <property type="term" value="C:cytosol"/>
    <property type="evidence" value="ECO:0007669"/>
    <property type="project" value="TreeGrafter"/>
</dbReference>
<dbReference type="GO" id="GO:1990904">
    <property type="term" value="C:ribonucleoprotein complex"/>
    <property type="evidence" value="ECO:0007669"/>
    <property type="project" value="TreeGrafter"/>
</dbReference>
<dbReference type="GO" id="GO:0005525">
    <property type="term" value="F:GTP binding"/>
    <property type="evidence" value="ECO:0007669"/>
    <property type="project" value="UniProtKB-KW"/>
</dbReference>
<dbReference type="GO" id="GO:0003924">
    <property type="term" value="F:GTPase activity"/>
    <property type="evidence" value="ECO:0007669"/>
    <property type="project" value="InterPro"/>
</dbReference>
<dbReference type="GO" id="GO:0043022">
    <property type="term" value="F:ribosome binding"/>
    <property type="evidence" value="ECO:0007669"/>
    <property type="project" value="TreeGrafter"/>
</dbReference>
<dbReference type="GO" id="GO:0003746">
    <property type="term" value="F:translation elongation factor activity"/>
    <property type="evidence" value="ECO:0007669"/>
    <property type="project" value="UniProtKB-KW"/>
</dbReference>
<dbReference type="CDD" id="cd01681">
    <property type="entry name" value="aeEF2_snRNP_like_IV"/>
    <property type="match status" value="1"/>
</dbReference>
<dbReference type="CDD" id="cd04096">
    <property type="entry name" value="eEF2_snRNP_like_C"/>
    <property type="match status" value="1"/>
</dbReference>
<dbReference type="CDD" id="cd01885">
    <property type="entry name" value="EF2"/>
    <property type="match status" value="1"/>
</dbReference>
<dbReference type="CDD" id="cd16268">
    <property type="entry name" value="EF2_II"/>
    <property type="match status" value="1"/>
</dbReference>
<dbReference type="CDD" id="cd16261">
    <property type="entry name" value="EF2_snRNP_III"/>
    <property type="match status" value="1"/>
</dbReference>
<dbReference type="FunFam" id="2.40.30.10:FF:000010">
    <property type="entry name" value="Translation elongation factor 2"/>
    <property type="match status" value="1"/>
</dbReference>
<dbReference type="FunFam" id="3.30.230.10:FF:000006">
    <property type="entry name" value="Translation elongation factor 2"/>
    <property type="match status" value="1"/>
</dbReference>
<dbReference type="FunFam" id="3.30.70.240:FF:000003">
    <property type="entry name" value="Translation elongation factor 2"/>
    <property type="match status" value="1"/>
</dbReference>
<dbReference type="FunFam" id="3.30.70.870:FF:000002">
    <property type="entry name" value="Translation elongation factor 2"/>
    <property type="match status" value="1"/>
</dbReference>
<dbReference type="FunFam" id="3.40.50.300:FF:000058">
    <property type="entry name" value="Translation elongation factor 2"/>
    <property type="match status" value="1"/>
</dbReference>
<dbReference type="Gene3D" id="3.30.230.10">
    <property type="match status" value="1"/>
</dbReference>
<dbReference type="Gene3D" id="3.30.70.240">
    <property type="match status" value="1"/>
</dbReference>
<dbReference type="Gene3D" id="3.30.70.870">
    <property type="entry name" value="Elongation Factor G (Translational Gtpase), domain 3"/>
    <property type="match status" value="1"/>
</dbReference>
<dbReference type="Gene3D" id="3.40.50.300">
    <property type="entry name" value="P-loop containing nucleotide triphosphate hydrolases"/>
    <property type="match status" value="1"/>
</dbReference>
<dbReference type="Gene3D" id="2.40.30.10">
    <property type="entry name" value="Translation factors"/>
    <property type="match status" value="1"/>
</dbReference>
<dbReference type="InterPro" id="IPR041095">
    <property type="entry name" value="EFG_II"/>
</dbReference>
<dbReference type="InterPro" id="IPR035647">
    <property type="entry name" value="EFG_III/V"/>
</dbReference>
<dbReference type="InterPro" id="IPR000640">
    <property type="entry name" value="EFG_V-like"/>
</dbReference>
<dbReference type="InterPro" id="IPR004161">
    <property type="entry name" value="EFTu-like_2"/>
</dbReference>
<dbReference type="InterPro" id="IPR031157">
    <property type="entry name" value="G_TR_CS"/>
</dbReference>
<dbReference type="InterPro" id="IPR027417">
    <property type="entry name" value="P-loop_NTPase"/>
</dbReference>
<dbReference type="InterPro" id="IPR020568">
    <property type="entry name" value="Ribosomal_Su5_D2-typ_SF"/>
</dbReference>
<dbReference type="InterPro" id="IPR014721">
    <property type="entry name" value="Ribsml_uS5_D2-typ_fold_subgr"/>
</dbReference>
<dbReference type="InterPro" id="IPR005225">
    <property type="entry name" value="Small_GTP-bd"/>
</dbReference>
<dbReference type="InterPro" id="IPR000795">
    <property type="entry name" value="T_Tr_GTP-bd_dom"/>
</dbReference>
<dbReference type="InterPro" id="IPR009000">
    <property type="entry name" value="Transl_B-barrel_sf"/>
</dbReference>
<dbReference type="InterPro" id="IPR005517">
    <property type="entry name" value="Transl_elong_EFG/EF2_IV"/>
</dbReference>
<dbReference type="NCBIfam" id="TIGR00231">
    <property type="entry name" value="small_GTP"/>
    <property type="match status" value="1"/>
</dbReference>
<dbReference type="PANTHER" id="PTHR42908:SF10">
    <property type="entry name" value="EUKARYOTIC TRANSLATION ELONGATION FACTOR 2"/>
    <property type="match status" value="1"/>
</dbReference>
<dbReference type="PANTHER" id="PTHR42908">
    <property type="entry name" value="TRANSLATION ELONGATION FACTOR-RELATED"/>
    <property type="match status" value="1"/>
</dbReference>
<dbReference type="Pfam" id="PF00679">
    <property type="entry name" value="EFG_C"/>
    <property type="match status" value="1"/>
</dbReference>
<dbReference type="Pfam" id="PF14492">
    <property type="entry name" value="EFG_III"/>
    <property type="match status" value="1"/>
</dbReference>
<dbReference type="Pfam" id="PF03764">
    <property type="entry name" value="EFG_IV"/>
    <property type="match status" value="1"/>
</dbReference>
<dbReference type="Pfam" id="PF00009">
    <property type="entry name" value="GTP_EFTU"/>
    <property type="match status" value="1"/>
</dbReference>
<dbReference type="Pfam" id="PF03144">
    <property type="entry name" value="GTP_EFTU_D2"/>
    <property type="match status" value="1"/>
</dbReference>
<dbReference type="PRINTS" id="PR00315">
    <property type="entry name" value="ELONGATNFCT"/>
</dbReference>
<dbReference type="SMART" id="SM00838">
    <property type="entry name" value="EFG_C"/>
    <property type="match status" value="1"/>
</dbReference>
<dbReference type="SMART" id="SM00889">
    <property type="entry name" value="EFG_IV"/>
    <property type="match status" value="1"/>
</dbReference>
<dbReference type="SUPFAM" id="SSF54980">
    <property type="entry name" value="EF-G C-terminal domain-like"/>
    <property type="match status" value="2"/>
</dbReference>
<dbReference type="SUPFAM" id="SSF52540">
    <property type="entry name" value="P-loop containing nucleoside triphosphate hydrolases"/>
    <property type="match status" value="1"/>
</dbReference>
<dbReference type="SUPFAM" id="SSF54211">
    <property type="entry name" value="Ribosomal protein S5 domain 2-like"/>
    <property type="match status" value="1"/>
</dbReference>
<dbReference type="SUPFAM" id="SSF50447">
    <property type="entry name" value="Translation proteins"/>
    <property type="match status" value="1"/>
</dbReference>
<dbReference type="PROSITE" id="PS00301">
    <property type="entry name" value="G_TR_1"/>
    <property type="match status" value="1"/>
</dbReference>
<dbReference type="PROSITE" id="PS51722">
    <property type="entry name" value="G_TR_2"/>
    <property type="match status" value="1"/>
</dbReference>
<comment type="function">
    <text evidence="2">Catalyzes the GTP-dependent ribosomal translocation step during translation elongation. During this step, the ribosome changes from the pre-translocational (PRE) to the post-translocational (POST) state as the newly formed A-site-bound peptidyl-tRNA and P-site-bound deacylated tRNA move to the P and E sites, respectively. Catalyzes the coordinated movement of the two tRNA molecules, the mRNA and conformational changes in the ribosome.</text>
</comment>
<comment type="catalytic activity">
    <reaction evidence="2">
        <text>GTP + H2O = GDP + phosphate + H(+)</text>
        <dbReference type="Rhea" id="RHEA:19669"/>
        <dbReference type="ChEBI" id="CHEBI:15377"/>
        <dbReference type="ChEBI" id="CHEBI:15378"/>
        <dbReference type="ChEBI" id="CHEBI:37565"/>
        <dbReference type="ChEBI" id="CHEBI:43474"/>
        <dbReference type="ChEBI" id="CHEBI:58189"/>
    </reaction>
    <physiologicalReaction direction="left-to-right" evidence="2">
        <dbReference type="Rhea" id="RHEA:19670"/>
    </physiologicalReaction>
</comment>
<comment type="subcellular location">
    <subcellularLocation>
        <location evidence="2">Cytoplasm</location>
    </subcellularLocation>
</comment>
<comment type="PTM">
    <text evidence="1">Phosphorylation by EF-2 kinase completely inactivates EF-2.</text>
</comment>
<comment type="similarity">
    <text evidence="3">Belongs to the TRAFAC class translation factor GTPase superfamily. Classic translation factor GTPase family. EF-G/EF-2 subfamily.</text>
</comment>
<name>EF2_BETVU</name>
<evidence type="ECO:0000250" key="1">
    <source>
        <dbReference type="UniProtKB" id="P13639"/>
    </source>
</evidence>
<evidence type="ECO:0000250" key="2">
    <source>
        <dbReference type="UniProtKB" id="P32324"/>
    </source>
</evidence>
<evidence type="ECO:0000255" key="3">
    <source>
        <dbReference type="PROSITE-ProRule" id="PRU01059"/>
    </source>
</evidence>
<keyword id="KW-0963">Cytoplasm</keyword>
<keyword id="KW-0251">Elongation factor</keyword>
<keyword id="KW-0342">GTP-binding</keyword>
<keyword id="KW-0378">Hydrolase</keyword>
<keyword id="KW-0547">Nucleotide-binding</keyword>
<keyword id="KW-0597">Phosphoprotein</keyword>
<keyword id="KW-0648">Protein biosynthesis</keyword>
<organism>
    <name type="scientific">Beta vulgaris</name>
    <name type="common">Sugar beet</name>
    <dbReference type="NCBI Taxonomy" id="161934"/>
    <lineage>
        <taxon>Eukaryota</taxon>
        <taxon>Viridiplantae</taxon>
        <taxon>Streptophyta</taxon>
        <taxon>Embryophyta</taxon>
        <taxon>Tracheophyta</taxon>
        <taxon>Spermatophyta</taxon>
        <taxon>Magnoliopsida</taxon>
        <taxon>eudicotyledons</taxon>
        <taxon>Gunneridae</taxon>
        <taxon>Pentapetalae</taxon>
        <taxon>Caryophyllales</taxon>
        <taxon>Chenopodiaceae</taxon>
        <taxon>Betoideae</taxon>
        <taxon>Beta</taxon>
    </lineage>
</organism>
<feature type="chain" id="PRO_0000091006" description="Elongation factor 2">
    <location>
        <begin position="1"/>
        <end position="843"/>
    </location>
</feature>
<feature type="domain" description="tr-type G" evidence="3">
    <location>
        <begin position="17"/>
        <end position="253"/>
    </location>
</feature>
<feature type="binding site" evidence="2">
    <location>
        <begin position="26"/>
        <end position="33"/>
    </location>
    <ligand>
        <name>GTP</name>
        <dbReference type="ChEBI" id="CHEBI:37565"/>
    </ligand>
</feature>
<feature type="binding site" evidence="2">
    <location>
        <begin position="158"/>
        <end position="161"/>
    </location>
    <ligand>
        <name>GTP</name>
        <dbReference type="ChEBI" id="CHEBI:37565"/>
    </ligand>
</feature>
<feature type="modified residue" description="Phosphothreonine" evidence="1">
    <location>
        <position position="57"/>
    </location>
</feature>
<feature type="modified residue" description="Phosphothreonine" evidence="1">
    <location>
        <position position="59"/>
    </location>
</feature>
<feature type="modified residue" description="Diphthamide" evidence="2">
    <location>
        <position position="700"/>
    </location>
</feature>